<organism>
    <name type="scientific">Caenorhabditis elegans</name>
    <dbReference type="NCBI Taxonomy" id="6239"/>
    <lineage>
        <taxon>Eukaryota</taxon>
        <taxon>Metazoa</taxon>
        <taxon>Ecdysozoa</taxon>
        <taxon>Nematoda</taxon>
        <taxon>Chromadorea</taxon>
        <taxon>Rhabditida</taxon>
        <taxon>Rhabditina</taxon>
        <taxon>Rhabditomorpha</taxon>
        <taxon>Rhabditoidea</taxon>
        <taxon>Rhabditidae</taxon>
        <taxon>Peloderinae</taxon>
        <taxon>Caenorhabditis</taxon>
    </lineage>
</organism>
<dbReference type="EMBL" id="Z81134">
    <property type="protein sequence ID" value="CAB54316.1"/>
    <property type="molecule type" value="Genomic_DNA"/>
</dbReference>
<dbReference type="PIR" id="T25417">
    <property type="entry name" value="T25417"/>
</dbReference>
<dbReference type="RefSeq" id="NP_499459.1">
    <property type="nucleotide sequence ID" value="NM_067058.6"/>
</dbReference>
<dbReference type="SMR" id="Q9U357"/>
<dbReference type="BioGRID" id="41747">
    <property type="interactions" value="2"/>
</dbReference>
<dbReference type="DIP" id="DIP-26665N"/>
<dbReference type="FunCoup" id="Q9U357">
    <property type="interactions" value="1596"/>
</dbReference>
<dbReference type="STRING" id="6239.T28D6.9.1"/>
<dbReference type="PaxDb" id="6239-T28D6.9"/>
<dbReference type="EnsemblMetazoa" id="T28D6.9.1">
    <property type="protein sequence ID" value="T28D6.9.1"/>
    <property type="gene ID" value="WBGene00003975"/>
</dbReference>
<dbReference type="GeneID" id="176565"/>
<dbReference type="KEGG" id="cel:CELE_T28D6.9"/>
<dbReference type="UCSC" id="T28D6.9">
    <property type="organism name" value="c. elegans"/>
</dbReference>
<dbReference type="AGR" id="WB:WBGene00003975"/>
<dbReference type="CTD" id="251430"/>
<dbReference type="WormBase" id="T28D6.9">
    <property type="protein sequence ID" value="CE24023"/>
    <property type="gene ID" value="WBGene00003975"/>
    <property type="gene designation" value="pen-2"/>
</dbReference>
<dbReference type="eggNOG" id="KOG3402">
    <property type="taxonomic scope" value="Eukaryota"/>
</dbReference>
<dbReference type="GeneTree" id="ENSGT00390000016319"/>
<dbReference type="HOGENOM" id="CLU_124142_2_0_1"/>
<dbReference type="InParanoid" id="Q9U357"/>
<dbReference type="OMA" id="KLYLCKW"/>
<dbReference type="OrthoDB" id="524898at2759"/>
<dbReference type="PhylomeDB" id="Q9U357"/>
<dbReference type="Reactome" id="R-CEL-1251985">
    <property type="pathway name" value="Nuclear signaling by ERBB4"/>
</dbReference>
<dbReference type="Reactome" id="R-CEL-3928665">
    <property type="pathway name" value="EPH-ephrin mediated repulsion of cells"/>
</dbReference>
<dbReference type="SignaLink" id="Q9U357"/>
<dbReference type="PRO" id="PR:Q9U357"/>
<dbReference type="Proteomes" id="UP000001940">
    <property type="component" value="Chromosome III"/>
</dbReference>
<dbReference type="Bgee" id="WBGene00003975">
    <property type="expression patterns" value="Expressed in germ line (C elegans) and 4 other cell types or tissues"/>
</dbReference>
<dbReference type="GO" id="GO:0005789">
    <property type="term" value="C:endoplasmic reticulum membrane"/>
    <property type="evidence" value="ECO:0007669"/>
    <property type="project" value="UniProtKB-SubCell"/>
</dbReference>
<dbReference type="GO" id="GO:0070765">
    <property type="term" value="C:gamma-secretase complex"/>
    <property type="evidence" value="ECO:0000250"/>
    <property type="project" value="WormBase"/>
</dbReference>
<dbReference type="GO" id="GO:0000139">
    <property type="term" value="C:Golgi membrane"/>
    <property type="evidence" value="ECO:0007669"/>
    <property type="project" value="UniProtKB-SubCell"/>
</dbReference>
<dbReference type="GO" id="GO:0016020">
    <property type="term" value="C:membrane"/>
    <property type="evidence" value="ECO:0000314"/>
    <property type="project" value="WormBase"/>
</dbReference>
<dbReference type="GO" id="GO:0045165">
    <property type="term" value="P:cell fate commitment"/>
    <property type="evidence" value="ECO:0000316"/>
    <property type="project" value="WormBase"/>
</dbReference>
<dbReference type="GO" id="GO:0009792">
    <property type="term" value="P:embryo development ending in birth or egg hatching"/>
    <property type="evidence" value="ECO:0000315"/>
    <property type="project" value="WormBase"/>
</dbReference>
<dbReference type="GO" id="GO:0048598">
    <property type="term" value="P:embryonic morphogenesis"/>
    <property type="evidence" value="ECO:0000315"/>
    <property type="project" value="WormBase"/>
</dbReference>
<dbReference type="GO" id="GO:0007281">
    <property type="term" value="P:germ cell development"/>
    <property type="evidence" value="ECO:0000316"/>
    <property type="project" value="WormBase"/>
</dbReference>
<dbReference type="GO" id="GO:0160094">
    <property type="term" value="P:nematode pharynx development"/>
    <property type="evidence" value="ECO:0000315"/>
    <property type="project" value="WormBase"/>
</dbReference>
<dbReference type="GO" id="GO:0007220">
    <property type="term" value="P:Notch receptor processing"/>
    <property type="evidence" value="ECO:0000318"/>
    <property type="project" value="GO_Central"/>
</dbReference>
<dbReference type="GO" id="GO:0007219">
    <property type="term" value="P:Notch signaling pathway"/>
    <property type="evidence" value="ECO:0000315"/>
    <property type="project" value="WormBase"/>
</dbReference>
<dbReference type="InterPro" id="IPR019379">
    <property type="entry name" value="Gamma_Secretase_Asp_P_PEN2"/>
</dbReference>
<dbReference type="PANTHER" id="PTHR16318">
    <property type="entry name" value="GAMMA-SECRETASE SUBUNIT PEN-2"/>
    <property type="match status" value="1"/>
</dbReference>
<dbReference type="PANTHER" id="PTHR16318:SF0">
    <property type="entry name" value="GAMMA-SECRETASE SUBUNIT PEN-2"/>
    <property type="match status" value="1"/>
</dbReference>
<dbReference type="Pfam" id="PF10251">
    <property type="entry name" value="PEN-2"/>
    <property type="match status" value="1"/>
</dbReference>
<feature type="chain" id="PRO_0000190903" description="Gamma-secretase subunit pen-2">
    <location>
        <begin position="1"/>
        <end position="101"/>
    </location>
</feature>
<feature type="topological domain" description="Lumenal" evidence="1">
    <location>
        <begin position="1"/>
        <end position="17"/>
    </location>
</feature>
<feature type="transmembrane region" description="Helical" evidence="1">
    <location>
        <begin position="18"/>
        <end position="38"/>
    </location>
</feature>
<feature type="topological domain" description="Cytoplasmic" evidence="1">
    <location>
        <begin position="39"/>
        <end position="57"/>
    </location>
</feature>
<feature type="transmembrane region" description="Helical" evidence="1">
    <location>
        <begin position="58"/>
        <end position="78"/>
    </location>
</feature>
<feature type="topological domain" description="Lumenal" evidence="1">
    <location>
        <begin position="79"/>
        <end position="101"/>
    </location>
</feature>
<accession>Q9U357</accession>
<reference key="1">
    <citation type="journal article" date="2002" name="Dev. Cell">
        <title>aph-1 and pen-2 are required for Notch pathway signaling, gamma-secretase cleavage of betaAPP, and presenilin protein accumulation.</title>
        <authorList>
            <person name="Francis R."/>
            <person name="McGrath G."/>
            <person name="Zhang J."/>
            <person name="Ruddy D.A."/>
            <person name="Sym M."/>
            <person name="Apfeld J."/>
            <person name="Nicoll M."/>
            <person name="Maxwell M."/>
            <person name="Hai B."/>
            <person name="Ellis M.C."/>
            <person name="Parks A.L."/>
            <person name="Xu W."/>
            <person name="Li J."/>
            <person name="Gurney M."/>
            <person name="Myers R.L."/>
            <person name="Himes C.S."/>
            <person name="Hiebsch R."/>
            <person name="Ruble C."/>
            <person name="Nye J.S."/>
            <person name="Curtis D."/>
        </authorList>
    </citation>
    <scope>NUCLEOTIDE SEQUENCE [GENOMIC DNA]</scope>
    <scope>FUNCTION</scope>
    <scope>SUBCELLULAR LOCATION</scope>
    <scope>TISSUE SPECIFICITY</scope>
</reference>
<reference key="2">
    <citation type="journal article" date="1998" name="Science">
        <title>Genome sequence of the nematode C. elegans: a platform for investigating biology.</title>
        <authorList>
            <consortium name="The C. elegans sequencing consortium"/>
        </authorList>
    </citation>
    <scope>NUCLEOTIDE SEQUENCE [LARGE SCALE GENOMIC DNA]</scope>
    <source>
        <strain>Bristol N2</strain>
    </source>
</reference>
<proteinExistence type="evidence at transcript level"/>
<name>PEN2_CAEEL</name>
<protein>
    <recommendedName>
        <fullName>Gamma-secretase subunit pen-2</fullName>
    </recommendedName>
    <alternativeName>
        <fullName>Presenilin enhancer protein 2</fullName>
    </alternativeName>
</protein>
<keyword id="KW-0256">Endoplasmic reticulum</keyword>
<keyword id="KW-0333">Golgi apparatus</keyword>
<keyword id="KW-0472">Membrane</keyword>
<keyword id="KW-0914">Notch signaling pathway</keyword>
<keyword id="KW-1185">Reference proteome</keyword>
<keyword id="KW-0812">Transmembrane</keyword>
<keyword id="KW-1133">Transmembrane helix</keyword>
<evidence type="ECO:0000255" key="1"/>
<evidence type="ECO:0000269" key="2">
    <source>
    </source>
</evidence>
<evidence type="ECO:0000305" key="3"/>
<comment type="function">
    <text evidence="2">Essential subunit of the gamma-secretase complex, an endoprotease complex that catalyzes the intramembrane cleavage of integral membrane proteins such as Notch (glp-1 or lin-12). It may represent a stabilizing cofactor for the presenilin homodimer that promotes the formation of a stable complex.</text>
</comment>
<comment type="subunit">
    <text evidence="3">Component of the gamma-secretase complex, a complex probably composed of the presenilin homodimer (sel-12, hop-1 or spe-4), nicastrin (aph-2), aph-1 and pen-2.</text>
</comment>
<comment type="subcellular location">
    <subcellularLocation>
        <location evidence="2">Endoplasmic reticulum membrane</location>
        <topology evidence="2">Multi-pass membrane protein</topology>
    </subcellularLocation>
    <subcellularLocation>
        <location evidence="2">Golgi apparatus membrane</location>
        <topology evidence="2">Multi-pass membrane protein</topology>
    </subcellularLocation>
    <text>Predominantly located in the endoplasmic reticulum and Golgi region.</text>
</comment>
<comment type="tissue specificity">
    <text evidence="2">Expressed from 100-cell stage in most somatic tissues, including neurons, muscle, intestine and developing vulva. Little or not expressed in early embryos.</text>
</comment>
<comment type="similarity">
    <text evidence="3">Belongs to the PEN-2 family.</text>
</comment>
<gene>
    <name type="primary">pen-2</name>
    <name type="ORF">T28D6.9</name>
</gene>
<sequence>MDISKLTDVKKVDLCKKYFLIGACFLPLVWIVNTFWFFSDAFCKPINAHRRQIRKYVIASIVGSIFWIIVLSAWEIFFQHYRAQGLVWTDFLTFVFPTGRV</sequence>